<sequence length="205" mass="23603">MTKRNEAKYKIDRRMGQNIWGRPKSPVNKREYGPGQHGQRRKGKLSDFGTQLRAKQKLKGYYGNISERQFYAIYVEATRMKGDSGENLIGLLERRLDTVVYRAKFVPTIFAARQFINHGHVKVNGRRVNIPSYKLKVGDTVEVKDASKQLALVLEANQLAERDVPDFIDADHNKQSAKFIRIPQLADVPFAVQMEPHLIVEFYSR</sequence>
<organism>
    <name type="scientific">Nitrobacter winogradskyi (strain ATCC 25391 / DSM 10237 / CIP 104748 / NCIMB 11846 / Nb-255)</name>
    <dbReference type="NCBI Taxonomy" id="323098"/>
    <lineage>
        <taxon>Bacteria</taxon>
        <taxon>Pseudomonadati</taxon>
        <taxon>Pseudomonadota</taxon>
        <taxon>Alphaproteobacteria</taxon>
        <taxon>Hyphomicrobiales</taxon>
        <taxon>Nitrobacteraceae</taxon>
        <taxon>Nitrobacter</taxon>
    </lineage>
</organism>
<keyword id="KW-1185">Reference proteome</keyword>
<keyword id="KW-0687">Ribonucleoprotein</keyword>
<keyword id="KW-0689">Ribosomal protein</keyword>
<keyword id="KW-0694">RNA-binding</keyword>
<keyword id="KW-0699">rRNA-binding</keyword>
<protein>
    <recommendedName>
        <fullName evidence="1">Small ribosomal subunit protein uS4</fullName>
    </recommendedName>
    <alternativeName>
        <fullName evidence="3">30S ribosomal protein S4</fullName>
    </alternativeName>
</protein>
<evidence type="ECO:0000255" key="1">
    <source>
        <dbReference type="HAMAP-Rule" id="MF_01306"/>
    </source>
</evidence>
<evidence type="ECO:0000256" key="2">
    <source>
        <dbReference type="SAM" id="MobiDB-lite"/>
    </source>
</evidence>
<evidence type="ECO:0000305" key="3"/>
<proteinExistence type="inferred from homology"/>
<gene>
    <name evidence="1" type="primary">rpsD</name>
    <name type="ordered locus">Nwi_1316</name>
</gene>
<accession>Q3ST14</accession>
<comment type="function">
    <text evidence="1">One of the primary rRNA binding proteins, it binds directly to 16S rRNA where it nucleates assembly of the body of the 30S subunit.</text>
</comment>
<comment type="function">
    <text evidence="1">With S5 and S12 plays an important role in translational accuracy.</text>
</comment>
<comment type="subunit">
    <text evidence="1">Part of the 30S ribosomal subunit. Contacts protein S5. The interaction surface between S4 and S5 is involved in control of translational fidelity.</text>
</comment>
<comment type="similarity">
    <text evidence="1">Belongs to the universal ribosomal protein uS4 family.</text>
</comment>
<feature type="chain" id="PRO_0000228905" description="Small ribosomal subunit protein uS4">
    <location>
        <begin position="1"/>
        <end position="205"/>
    </location>
</feature>
<feature type="domain" description="S4 RNA-binding" evidence="1">
    <location>
        <begin position="94"/>
        <end position="157"/>
    </location>
</feature>
<feature type="region of interest" description="Disordered" evidence="2">
    <location>
        <begin position="18"/>
        <end position="49"/>
    </location>
</feature>
<reference key="1">
    <citation type="journal article" date="2006" name="Appl. Environ. Microbiol.">
        <title>Genome sequence of the chemolithoautotrophic nitrite-oxidizing bacterium Nitrobacter winogradskyi Nb-255.</title>
        <authorList>
            <person name="Starkenburg S.R."/>
            <person name="Chain P.S.G."/>
            <person name="Sayavedra-Soto L.A."/>
            <person name="Hauser L."/>
            <person name="Land M.L."/>
            <person name="Larimer F.W."/>
            <person name="Malfatti S.A."/>
            <person name="Klotz M.G."/>
            <person name="Bottomley P.J."/>
            <person name="Arp D.J."/>
            <person name="Hickey W.J."/>
        </authorList>
    </citation>
    <scope>NUCLEOTIDE SEQUENCE [LARGE SCALE GENOMIC DNA]</scope>
    <source>
        <strain>ATCC 25391 / DSM 10237 / CIP 104748 / NCIMB 11846 / Nb-255</strain>
    </source>
</reference>
<name>RS4_NITWN</name>
<dbReference type="EMBL" id="CP000115">
    <property type="protein sequence ID" value="ABA04577.1"/>
    <property type="molecule type" value="Genomic_DNA"/>
</dbReference>
<dbReference type="RefSeq" id="WP_011314595.1">
    <property type="nucleotide sequence ID" value="NC_007406.1"/>
</dbReference>
<dbReference type="SMR" id="Q3ST14"/>
<dbReference type="STRING" id="323098.Nwi_1316"/>
<dbReference type="KEGG" id="nwi:Nwi_1316"/>
<dbReference type="eggNOG" id="COG0522">
    <property type="taxonomic scope" value="Bacteria"/>
</dbReference>
<dbReference type="HOGENOM" id="CLU_092403_0_0_5"/>
<dbReference type="OrthoDB" id="9803672at2"/>
<dbReference type="Proteomes" id="UP000002531">
    <property type="component" value="Chromosome"/>
</dbReference>
<dbReference type="GO" id="GO:0015935">
    <property type="term" value="C:small ribosomal subunit"/>
    <property type="evidence" value="ECO:0007669"/>
    <property type="project" value="InterPro"/>
</dbReference>
<dbReference type="GO" id="GO:0019843">
    <property type="term" value="F:rRNA binding"/>
    <property type="evidence" value="ECO:0007669"/>
    <property type="project" value="UniProtKB-UniRule"/>
</dbReference>
<dbReference type="GO" id="GO:0003735">
    <property type="term" value="F:structural constituent of ribosome"/>
    <property type="evidence" value="ECO:0007669"/>
    <property type="project" value="InterPro"/>
</dbReference>
<dbReference type="GO" id="GO:0042274">
    <property type="term" value="P:ribosomal small subunit biogenesis"/>
    <property type="evidence" value="ECO:0007669"/>
    <property type="project" value="TreeGrafter"/>
</dbReference>
<dbReference type="GO" id="GO:0006412">
    <property type="term" value="P:translation"/>
    <property type="evidence" value="ECO:0007669"/>
    <property type="project" value="UniProtKB-UniRule"/>
</dbReference>
<dbReference type="CDD" id="cd00165">
    <property type="entry name" value="S4"/>
    <property type="match status" value="1"/>
</dbReference>
<dbReference type="FunFam" id="3.10.290.10:FF:000001">
    <property type="entry name" value="30S ribosomal protein S4"/>
    <property type="match status" value="1"/>
</dbReference>
<dbReference type="Gene3D" id="1.10.1050.10">
    <property type="entry name" value="Ribosomal Protein S4 Delta 41, Chain A, domain 1"/>
    <property type="match status" value="1"/>
</dbReference>
<dbReference type="Gene3D" id="3.10.290.10">
    <property type="entry name" value="RNA-binding S4 domain"/>
    <property type="match status" value="1"/>
</dbReference>
<dbReference type="HAMAP" id="MF_01306_B">
    <property type="entry name" value="Ribosomal_uS4_B"/>
    <property type="match status" value="1"/>
</dbReference>
<dbReference type="InterPro" id="IPR022801">
    <property type="entry name" value="Ribosomal_uS4"/>
</dbReference>
<dbReference type="InterPro" id="IPR005709">
    <property type="entry name" value="Ribosomal_uS4_bac-type"/>
</dbReference>
<dbReference type="InterPro" id="IPR018079">
    <property type="entry name" value="Ribosomal_uS4_CS"/>
</dbReference>
<dbReference type="InterPro" id="IPR001912">
    <property type="entry name" value="Ribosomal_uS4_N"/>
</dbReference>
<dbReference type="InterPro" id="IPR002942">
    <property type="entry name" value="S4_RNA-bd"/>
</dbReference>
<dbReference type="InterPro" id="IPR036986">
    <property type="entry name" value="S4_RNA-bd_sf"/>
</dbReference>
<dbReference type="NCBIfam" id="NF003717">
    <property type="entry name" value="PRK05327.1"/>
    <property type="match status" value="1"/>
</dbReference>
<dbReference type="NCBIfam" id="TIGR01017">
    <property type="entry name" value="rpsD_bact"/>
    <property type="match status" value="1"/>
</dbReference>
<dbReference type="PANTHER" id="PTHR11831">
    <property type="entry name" value="30S 40S RIBOSOMAL PROTEIN"/>
    <property type="match status" value="1"/>
</dbReference>
<dbReference type="PANTHER" id="PTHR11831:SF4">
    <property type="entry name" value="SMALL RIBOSOMAL SUBUNIT PROTEIN US4M"/>
    <property type="match status" value="1"/>
</dbReference>
<dbReference type="Pfam" id="PF00163">
    <property type="entry name" value="Ribosomal_S4"/>
    <property type="match status" value="1"/>
</dbReference>
<dbReference type="Pfam" id="PF01479">
    <property type="entry name" value="S4"/>
    <property type="match status" value="1"/>
</dbReference>
<dbReference type="SMART" id="SM01390">
    <property type="entry name" value="Ribosomal_S4"/>
    <property type="match status" value="1"/>
</dbReference>
<dbReference type="SMART" id="SM00363">
    <property type="entry name" value="S4"/>
    <property type="match status" value="1"/>
</dbReference>
<dbReference type="SUPFAM" id="SSF55174">
    <property type="entry name" value="Alpha-L RNA-binding motif"/>
    <property type="match status" value="1"/>
</dbReference>
<dbReference type="PROSITE" id="PS00632">
    <property type="entry name" value="RIBOSOMAL_S4"/>
    <property type="match status" value="1"/>
</dbReference>
<dbReference type="PROSITE" id="PS50889">
    <property type="entry name" value="S4"/>
    <property type="match status" value="1"/>
</dbReference>